<reference evidence="5" key="1">
    <citation type="journal article" date="2007" name="J. Cell Sci.">
        <title>Mitch a rapidly evolving component of the Ndc80 kinetochore complex required for correct chromosome segregation in Drosophila.</title>
        <authorList>
            <person name="Williams B."/>
            <person name="Leung G."/>
            <person name="Maiato H."/>
            <person name="Wong A."/>
            <person name="Li Z."/>
            <person name="Williams E.V."/>
            <person name="Kirkpatrick C."/>
            <person name="Aquadro C.F."/>
            <person name="Rieder C.L."/>
            <person name="Goldberg M.L."/>
        </authorList>
    </citation>
    <scope>NUCLEOTIDE SEQUENCE [GENOMIC DNA]</scope>
</reference>
<reference evidence="6" key="2">
    <citation type="journal article" date="2007" name="Nature">
        <title>Evolution of genes and genomes on the Drosophila phylogeny.</title>
        <authorList>
            <consortium name="Drosophila 12 genomes consortium"/>
        </authorList>
    </citation>
    <scope>NUCLEOTIDE SEQUENCE [LARGE SCALE GENOMIC DNA]</scope>
    <source>
        <strain evidence="6">Rob3c / Tucson 14021-0248.25</strain>
    </source>
</reference>
<dbReference type="EMBL" id="AY714308">
    <property type="protein sequence ID" value="AAU15002.1"/>
    <property type="molecule type" value="Genomic_DNA"/>
</dbReference>
<dbReference type="EMBL" id="CH480815">
    <property type="protein sequence ID" value="EDW42388.1"/>
    <property type="molecule type" value="Genomic_DNA"/>
</dbReference>
<dbReference type="RefSeq" id="XP_002031402.1">
    <property type="nucleotide sequence ID" value="XM_002031366.1"/>
</dbReference>
<dbReference type="SMR" id="B4HGE0"/>
<dbReference type="STRING" id="7238.B4HGE0"/>
<dbReference type="EnsemblMetazoa" id="FBtr0207052">
    <property type="protein sequence ID" value="FBpp0205544"/>
    <property type="gene ID" value="FBgn0082413"/>
</dbReference>
<dbReference type="HOGENOM" id="CLU_1246541_0_0_1"/>
<dbReference type="OMA" id="NELMECM"/>
<dbReference type="PhylomeDB" id="B4HGE0"/>
<dbReference type="Proteomes" id="UP000001292">
    <property type="component" value="Unassembled WGS sequence"/>
</dbReference>
<dbReference type="GO" id="GO:0031262">
    <property type="term" value="C:Ndc80 complex"/>
    <property type="evidence" value="ECO:0000250"/>
    <property type="project" value="UniProtKB"/>
</dbReference>
<dbReference type="GO" id="GO:0005634">
    <property type="term" value="C:nucleus"/>
    <property type="evidence" value="ECO:0007669"/>
    <property type="project" value="UniProtKB-SubCell"/>
</dbReference>
<dbReference type="GO" id="GO:0051301">
    <property type="term" value="P:cell division"/>
    <property type="evidence" value="ECO:0007669"/>
    <property type="project" value="UniProtKB-KW"/>
</dbReference>
<dbReference type="GO" id="GO:0051311">
    <property type="term" value="P:meiotic metaphase chromosome alignment"/>
    <property type="evidence" value="ECO:0000250"/>
    <property type="project" value="UniProtKB"/>
</dbReference>
<dbReference type="GO" id="GO:0000212">
    <property type="term" value="P:meiotic spindle organization"/>
    <property type="evidence" value="ECO:0000250"/>
    <property type="project" value="UniProtKB"/>
</dbReference>
<dbReference type="GO" id="GO:0007080">
    <property type="term" value="P:mitotic metaphase chromosome alignment"/>
    <property type="evidence" value="ECO:0007669"/>
    <property type="project" value="EnsemblMetazoa"/>
</dbReference>
<comment type="function">
    <text evidence="1 2">Acts as a component of the essential kinetochore-associated Ndc80 complex, which is required for chromosome segregation and spindle checkpoint activity during meiosis and mitosis. Required for kinetochore integrity and the organization of stable microtubule binding sites in the outer plate of the kinetochore. Participates in SAC signaling that responds specifically to disruptions in spindle microtubule dynamics. The NDC80 complex synergistically enhances the affinity of the SKA1 complex for microtubules and may allow the NDC80 complex to track depolymerizing microtubules.</text>
</comment>
<comment type="subunit">
    <text evidence="2">Component of the Ndc80 complex, which is composed of Ndc80, Nuf2 and Spc25.</text>
</comment>
<comment type="subcellular location">
    <subcellularLocation>
        <location evidence="2">Nucleus</location>
    </subcellularLocation>
    <subcellularLocation>
        <location evidence="2">Chromosome</location>
        <location evidence="2">Centromere</location>
        <location evidence="2">Kinetochore</location>
    </subcellularLocation>
</comment>
<comment type="similarity">
    <text evidence="3">Belongs to the SPC25 family.</text>
</comment>
<evidence type="ECO:0000250" key="1">
    <source>
        <dbReference type="UniProtKB" id="Q9HBM1"/>
    </source>
</evidence>
<evidence type="ECO:0000250" key="2">
    <source>
        <dbReference type="UniProtKB" id="Q9V3V7"/>
    </source>
</evidence>
<evidence type="ECO:0000255" key="3"/>
<evidence type="ECO:0000305" key="4"/>
<evidence type="ECO:0000312" key="5">
    <source>
        <dbReference type="EMBL" id="AAU15002.1"/>
    </source>
</evidence>
<evidence type="ECO:0000312" key="6">
    <source>
        <dbReference type="EMBL" id="EDW42388.1"/>
    </source>
</evidence>
<sequence length="222" mass="25678">MAIIMTESSYERRVKALYEKQIRMEALEAKFIKKVYKFNSNLWDVKEAACRHQRKVGKLQKVIMERREELDKRVSFIEELDRELEATKLRSLAMKDRIKQQKMLARQRKNEIMESIHTLSKTTGTYINQEALPARVKGVTVLRGDKRNQLIPFDLKSTDVEGLDSLCQHLESLNVDMAQWQQLISLAMDVAMESRAPTTPPKEAANCNSIIEIDLTSPTCHI</sequence>
<protein>
    <recommendedName>
        <fullName evidence="2">Kinetochore protein Spc25</fullName>
    </recommendedName>
</protein>
<name>SPC25_DROSE</name>
<gene>
    <name evidence="2" type="primary">Spc25</name>
    <name evidence="6" type="synonym">mitch</name>
    <name type="ORF">GM24067</name>
</gene>
<feature type="chain" id="PRO_0000392425" description="Kinetochore protein Spc25">
    <location>
        <begin position="1"/>
        <end position="222"/>
    </location>
</feature>
<feature type="coiled-coil region" evidence="3">
    <location>
        <begin position="51"/>
        <end position="100"/>
    </location>
</feature>
<feature type="sequence conflict" description="In Ref. 1; AAU15002." evidence="4" ref="1">
    <original>W</original>
    <variation>L</variation>
    <location>
        <position position="43"/>
    </location>
</feature>
<feature type="sequence conflict" description="In Ref. 1; AAU15002." evidence="4" ref="1">
    <original>C</original>
    <variation>G</variation>
    <location>
        <position position="220"/>
    </location>
</feature>
<proteinExistence type="inferred from homology"/>
<keyword id="KW-0131">Cell cycle</keyword>
<keyword id="KW-0132">Cell division</keyword>
<keyword id="KW-0137">Centromere</keyword>
<keyword id="KW-0158">Chromosome</keyword>
<keyword id="KW-0175">Coiled coil</keyword>
<keyword id="KW-0995">Kinetochore</keyword>
<keyword id="KW-0469">Meiosis</keyword>
<keyword id="KW-0498">Mitosis</keyword>
<keyword id="KW-0539">Nucleus</keyword>
<keyword id="KW-1185">Reference proteome</keyword>
<accession>B4HGE0</accession>
<accession>Q64EW5</accession>
<organism>
    <name type="scientific">Drosophila sechellia</name>
    <name type="common">Fruit fly</name>
    <dbReference type="NCBI Taxonomy" id="7238"/>
    <lineage>
        <taxon>Eukaryota</taxon>
        <taxon>Metazoa</taxon>
        <taxon>Ecdysozoa</taxon>
        <taxon>Arthropoda</taxon>
        <taxon>Hexapoda</taxon>
        <taxon>Insecta</taxon>
        <taxon>Pterygota</taxon>
        <taxon>Neoptera</taxon>
        <taxon>Endopterygota</taxon>
        <taxon>Diptera</taxon>
        <taxon>Brachycera</taxon>
        <taxon>Muscomorpha</taxon>
        <taxon>Ephydroidea</taxon>
        <taxon>Drosophilidae</taxon>
        <taxon>Drosophila</taxon>
        <taxon>Sophophora</taxon>
    </lineage>
</organism>